<organism>
    <name type="scientific">Anaeromyxobacter dehalogenans (strain 2CP-C)</name>
    <dbReference type="NCBI Taxonomy" id="290397"/>
    <lineage>
        <taxon>Bacteria</taxon>
        <taxon>Pseudomonadati</taxon>
        <taxon>Myxococcota</taxon>
        <taxon>Myxococcia</taxon>
        <taxon>Myxococcales</taxon>
        <taxon>Cystobacterineae</taxon>
        <taxon>Anaeromyxobacteraceae</taxon>
        <taxon>Anaeromyxobacter</taxon>
    </lineage>
</organism>
<protein>
    <recommendedName>
        <fullName evidence="2">tRNA (guanine-N(7)-)-methyltransferase</fullName>
        <ecNumber evidence="2">2.1.1.33</ecNumber>
    </recommendedName>
    <alternativeName>
        <fullName evidence="2">tRNA (guanine(46)-N(7))-methyltransferase</fullName>
    </alternativeName>
    <alternativeName>
        <fullName evidence="2">tRNA(m7G46)-methyltransferase</fullName>
    </alternativeName>
</protein>
<reference key="1">
    <citation type="submission" date="2006-01" db="EMBL/GenBank/DDBJ databases">
        <title>Complete sequence of Anaeromyxobacter dehalogenans 2CP-C.</title>
        <authorList>
            <person name="Copeland A."/>
            <person name="Lucas S."/>
            <person name="Lapidus A."/>
            <person name="Barry K."/>
            <person name="Detter J.C."/>
            <person name="Glavina T."/>
            <person name="Hammon N."/>
            <person name="Israni S."/>
            <person name="Pitluck S."/>
            <person name="Brettin T."/>
            <person name="Bruce D."/>
            <person name="Han C."/>
            <person name="Tapia R."/>
            <person name="Gilna P."/>
            <person name="Kiss H."/>
            <person name="Schmutz J."/>
            <person name="Larimer F."/>
            <person name="Land M."/>
            <person name="Kyrpides N."/>
            <person name="Anderson I."/>
            <person name="Sanford R.A."/>
            <person name="Ritalahti K.M."/>
            <person name="Thomas H.S."/>
            <person name="Kirby J.R."/>
            <person name="Zhulin I.B."/>
            <person name="Loeffler F.E."/>
            <person name="Richardson P."/>
        </authorList>
    </citation>
    <scope>NUCLEOTIDE SEQUENCE [LARGE SCALE GENOMIC DNA]</scope>
    <source>
        <strain>2CP-C</strain>
    </source>
</reference>
<gene>
    <name evidence="2" type="primary">trmB</name>
    <name type="ordered locus">Adeh_3785</name>
</gene>
<feature type="chain" id="PRO_0000288117" description="tRNA (guanine-N(7)-)-methyltransferase">
    <location>
        <begin position="1"/>
        <end position="201"/>
    </location>
</feature>
<feature type="active site" evidence="1">
    <location>
        <position position="108"/>
    </location>
</feature>
<feature type="binding site" evidence="2">
    <location>
        <position position="33"/>
    </location>
    <ligand>
        <name>S-adenosyl-L-methionine</name>
        <dbReference type="ChEBI" id="CHEBI:59789"/>
    </ligand>
</feature>
<feature type="binding site" evidence="2">
    <location>
        <position position="58"/>
    </location>
    <ligand>
        <name>S-adenosyl-L-methionine</name>
        <dbReference type="ChEBI" id="CHEBI:59789"/>
    </ligand>
</feature>
<feature type="binding site" evidence="2">
    <location>
        <position position="85"/>
    </location>
    <ligand>
        <name>S-adenosyl-L-methionine</name>
        <dbReference type="ChEBI" id="CHEBI:59789"/>
    </ligand>
</feature>
<feature type="binding site" evidence="2">
    <location>
        <position position="108"/>
    </location>
    <ligand>
        <name>S-adenosyl-L-methionine</name>
        <dbReference type="ChEBI" id="CHEBI:59789"/>
    </ligand>
</feature>
<feature type="binding site" evidence="2">
    <location>
        <position position="112"/>
    </location>
    <ligand>
        <name>substrate</name>
    </ligand>
</feature>
<feature type="binding site" evidence="2">
    <location>
        <position position="144"/>
    </location>
    <ligand>
        <name>substrate</name>
    </ligand>
</feature>
<dbReference type="EC" id="2.1.1.33" evidence="2"/>
<dbReference type="EMBL" id="CP000251">
    <property type="protein sequence ID" value="ABC83551.1"/>
    <property type="molecule type" value="Genomic_DNA"/>
</dbReference>
<dbReference type="RefSeq" id="WP_011422833.1">
    <property type="nucleotide sequence ID" value="NC_007760.1"/>
</dbReference>
<dbReference type="SMR" id="Q2IG43"/>
<dbReference type="STRING" id="290397.Adeh_3785"/>
<dbReference type="KEGG" id="ade:Adeh_3785"/>
<dbReference type="eggNOG" id="COG0220">
    <property type="taxonomic scope" value="Bacteria"/>
</dbReference>
<dbReference type="HOGENOM" id="CLU_050910_2_0_7"/>
<dbReference type="OrthoDB" id="9802090at2"/>
<dbReference type="UniPathway" id="UPA00989"/>
<dbReference type="Proteomes" id="UP000001935">
    <property type="component" value="Chromosome"/>
</dbReference>
<dbReference type="GO" id="GO:0043527">
    <property type="term" value="C:tRNA methyltransferase complex"/>
    <property type="evidence" value="ECO:0007669"/>
    <property type="project" value="TreeGrafter"/>
</dbReference>
<dbReference type="GO" id="GO:0008176">
    <property type="term" value="F:tRNA (guanine(46)-N7)-methyltransferase activity"/>
    <property type="evidence" value="ECO:0007669"/>
    <property type="project" value="UniProtKB-UniRule"/>
</dbReference>
<dbReference type="CDD" id="cd02440">
    <property type="entry name" value="AdoMet_MTases"/>
    <property type="match status" value="1"/>
</dbReference>
<dbReference type="Gene3D" id="3.40.50.150">
    <property type="entry name" value="Vaccinia Virus protein VP39"/>
    <property type="match status" value="1"/>
</dbReference>
<dbReference type="HAMAP" id="MF_01057">
    <property type="entry name" value="tRNA_methyltr_TrmB"/>
    <property type="match status" value="1"/>
</dbReference>
<dbReference type="InterPro" id="IPR029063">
    <property type="entry name" value="SAM-dependent_MTases_sf"/>
</dbReference>
<dbReference type="InterPro" id="IPR003358">
    <property type="entry name" value="tRNA_(Gua-N-7)_MeTrfase_Trmb"/>
</dbReference>
<dbReference type="InterPro" id="IPR055361">
    <property type="entry name" value="tRNA_methyltr_TrmB_bact"/>
</dbReference>
<dbReference type="NCBIfam" id="TIGR00091">
    <property type="entry name" value="tRNA (guanosine(46)-N7)-methyltransferase TrmB"/>
    <property type="match status" value="1"/>
</dbReference>
<dbReference type="PANTHER" id="PTHR23417">
    <property type="entry name" value="3-DEOXY-D-MANNO-OCTULOSONIC-ACID TRANSFERASE/TRNA GUANINE-N 7 - -METHYLTRANSFERASE"/>
    <property type="match status" value="1"/>
</dbReference>
<dbReference type="PANTHER" id="PTHR23417:SF14">
    <property type="entry name" value="PENTACOTRIPEPTIDE-REPEAT REGION OF PRORP DOMAIN-CONTAINING PROTEIN"/>
    <property type="match status" value="1"/>
</dbReference>
<dbReference type="Pfam" id="PF02390">
    <property type="entry name" value="Methyltransf_4"/>
    <property type="match status" value="1"/>
</dbReference>
<dbReference type="SUPFAM" id="SSF53335">
    <property type="entry name" value="S-adenosyl-L-methionine-dependent methyltransferases"/>
    <property type="match status" value="1"/>
</dbReference>
<dbReference type="PROSITE" id="PS51625">
    <property type="entry name" value="SAM_MT_TRMB"/>
    <property type="match status" value="1"/>
</dbReference>
<comment type="function">
    <text evidence="2">Catalyzes the formation of N(7)-methylguanine at position 46 (m7G46) in tRNA.</text>
</comment>
<comment type="catalytic activity">
    <reaction evidence="2">
        <text>guanosine(46) in tRNA + S-adenosyl-L-methionine = N(7)-methylguanosine(46) in tRNA + S-adenosyl-L-homocysteine</text>
        <dbReference type="Rhea" id="RHEA:42708"/>
        <dbReference type="Rhea" id="RHEA-COMP:10188"/>
        <dbReference type="Rhea" id="RHEA-COMP:10189"/>
        <dbReference type="ChEBI" id="CHEBI:57856"/>
        <dbReference type="ChEBI" id="CHEBI:59789"/>
        <dbReference type="ChEBI" id="CHEBI:74269"/>
        <dbReference type="ChEBI" id="CHEBI:74480"/>
        <dbReference type="EC" id="2.1.1.33"/>
    </reaction>
</comment>
<comment type="pathway">
    <text evidence="2">tRNA modification; N(7)-methylguanine-tRNA biosynthesis.</text>
</comment>
<comment type="similarity">
    <text evidence="2">Belongs to the class I-like SAM-binding methyltransferase superfamily. TrmB family.</text>
</comment>
<accession>Q2IG43</accession>
<name>TRMB_ANADE</name>
<keyword id="KW-0489">Methyltransferase</keyword>
<keyword id="KW-1185">Reference proteome</keyword>
<keyword id="KW-0949">S-adenosyl-L-methionine</keyword>
<keyword id="KW-0808">Transferase</keyword>
<keyword id="KW-0819">tRNA processing</keyword>
<evidence type="ECO:0000250" key="1"/>
<evidence type="ECO:0000255" key="2">
    <source>
        <dbReference type="HAMAP-Rule" id="MF_01057"/>
    </source>
</evidence>
<sequence>MIFSIEDDAPIVRDLLPDWRARFGEAGGRLELEIGCGHGGFALGFARAFPERALVGIEQRRKFAAELAAKGARHGLSNLLVLNGDARLLAPRLFAAGSLAAIHVHFPDPWWKRRHHRRRLVDDRMSALLLGLLAPGGVLDFRTDVERYAREAVVRLEEVGFRNAAGPGRFAEAAPDEIPSTRERRYLASGEPVWRLRLVKA</sequence>
<proteinExistence type="inferred from homology"/>